<organism>
    <name type="scientific">Oulactis sp.</name>
    <name type="common">Sea anemone</name>
    <dbReference type="NCBI Taxonomy" id="2093647"/>
    <lineage>
        <taxon>Eukaryota</taxon>
        <taxon>Metazoa</taxon>
        <taxon>Cnidaria</taxon>
        <taxon>Anthozoa</taxon>
        <taxon>Hexacorallia</taxon>
        <taxon>Actiniaria</taxon>
        <taxon>Actiniidae</taxon>
        <taxon>Oulactis</taxon>
    </lineage>
</organism>
<protein>
    <recommendedName>
        <fullName evidence="4">Insulin-like peptide IlO1_i1</fullName>
        <shortName evidence="4">ILP IlO1_i1</shortName>
    </recommendedName>
    <component>
        <recommendedName>
            <fullName evidence="4">ILP IlO1_i1 B chain</fullName>
        </recommendedName>
    </component>
    <component>
        <recommendedName>
            <fullName evidence="4">ILP IlO1_i1 A chain</fullName>
        </recommendedName>
    </component>
</protein>
<dbReference type="EMBL" id="LR700308">
    <property type="protein sequence ID" value="VVJ25857.1"/>
    <property type="molecule type" value="mRNA"/>
</dbReference>
<dbReference type="GO" id="GO:0005576">
    <property type="term" value="C:extracellular region"/>
    <property type="evidence" value="ECO:0007669"/>
    <property type="project" value="InterPro"/>
</dbReference>
<dbReference type="GO" id="GO:0005179">
    <property type="term" value="F:hormone activity"/>
    <property type="evidence" value="ECO:0007669"/>
    <property type="project" value="InterPro"/>
</dbReference>
<dbReference type="Gene3D" id="1.10.100.10">
    <property type="entry name" value="Insulin-like"/>
    <property type="match status" value="1"/>
</dbReference>
<dbReference type="InterPro" id="IPR016179">
    <property type="entry name" value="Insulin-like"/>
</dbReference>
<dbReference type="InterPro" id="IPR036438">
    <property type="entry name" value="Insulin-like_sf"/>
</dbReference>
<dbReference type="InterPro" id="IPR016724">
    <property type="entry name" value="Insulin-rel_pep"/>
</dbReference>
<dbReference type="InterPro" id="IPR022353">
    <property type="entry name" value="Insulin_CS"/>
</dbReference>
<dbReference type="InterPro" id="IPR022352">
    <property type="entry name" value="Insulin_family"/>
</dbReference>
<dbReference type="Pfam" id="PF00049">
    <property type="entry name" value="Insulin"/>
    <property type="match status" value="1"/>
</dbReference>
<dbReference type="PIRSF" id="PIRSF018431">
    <property type="entry name" value="Molluscan_insulin_rel_peptide"/>
    <property type="match status" value="1"/>
</dbReference>
<dbReference type="PRINTS" id="PR00276">
    <property type="entry name" value="INSULINFAMLY"/>
</dbReference>
<dbReference type="SUPFAM" id="SSF56994">
    <property type="entry name" value="Insulin-like"/>
    <property type="match status" value="1"/>
</dbReference>
<dbReference type="PROSITE" id="PS00262">
    <property type="entry name" value="INSULIN"/>
    <property type="match status" value="1"/>
</dbReference>
<keyword id="KW-1015">Disulfide bond</keyword>
<keyword id="KW-0872">Ion channel impairing toxin</keyword>
<keyword id="KW-0964">Secreted</keyword>
<keyword id="KW-0732">Signal</keyword>
<keyword id="KW-0800">Toxin</keyword>
<accession>P0DY19</accession>
<accession>A0A8K1XL00</accession>
<sequence length="115" mass="13109">MFVYTTIMLLLLAEINHSQGCSGLCKINESPQTNIDYRICGDQITQKYTELCGNPAAGRRNRITGLDQRSIFESNLLAKRFLISRRQIVNNRRTDIVEECCAEGCKAEEVKEYCI</sequence>
<name>INS_OULSP</name>
<feature type="signal peptide" evidence="2">
    <location>
        <begin position="1"/>
        <end position="20"/>
    </location>
</feature>
<feature type="chain" id="PRO_0000461945" description="ILP IlO1_i1 B chain" evidence="6">
    <location>
        <begin position="21"/>
        <end position="58"/>
    </location>
</feature>
<feature type="propeptide" id="PRO_0000461946" description="C peptide" evidence="5">
    <location>
        <begin position="59"/>
        <end position="93"/>
    </location>
</feature>
<feature type="chain" id="PRO_0000461947" description="ILP IlO1_i1 A chain" evidence="6">
    <location>
        <begin position="94"/>
        <end position="115"/>
    </location>
</feature>
<feature type="disulfide bond" description="Interchain (between B and A chains)" evidence="1">
    <location>
        <begin position="40"/>
        <end position="101"/>
    </location>
</feature>
<feature type="disulfide bond" description="Interchain (between B and A chains)" evidence="1">
    <location>
        <begin position="52"/>
        <end position="114"/>
    </location>
</feature>
<feature type="disulfide bond" evidence="1">
    <location>
        <begin position="100"/>
        <end position="105"/>
    </location>
</feature>
<feature type="sequence conflict" description="In Ref. 1; VVJ25857." evidence="5" ref="1">
    <location>
        <position position="18"/>
    </location>
</feature>
<evidence type="ECO:0000250" key="1">
    <source>
        <dbReference type="UniProtKB" id="P01308"/>
    </source>
</evidence>
<evidence type="ECO:0000255" key="2"/>
<evidence type="ECO:0000269" key="3">
    <source>
    </source>
</evidence>
<evidence type="ECO:0000303" key="4">
    <source>
    </source>
</evidence>
<evidence type="ECO:0000305" key="5"/>
<evidence type="ECO:0000305" key="6">
    <source>
    </source>
</evidence>
<comment type="function">
    <text evidence="3 5">Heterodimer with unknown function (Probable). Surprisingly, the truncated synthetic analog (dimer of 27-58 and 94-115) does not bind to long insulin receptor (HIR-B) and insulin-like growth factor 1 receptor. This truncated synthetic analog shows very weak inhibitory activity on different voltage-gated channels (PubMed:34944429).</text>
</comment>
<comment type="subcellular location">
    <subcellularLocation>
        <location evidence="6">Secreted</location>
    </subcellularLocation>
</comment>
<comment type="tissue specificity">
    <text evidence="3">Expressed in tentacles.</text>
</comment>
<comment type="domain">
    <text evidence="3">The truncated synthetic analog (dimer of 27-58 and 94-115) does not display the characteristic helical content of insulin and is largely disorded.</text>
</comment>
<comment type="miscellaneous">
    <text evidence="3">Negative results: the truncated synthetic analog (dimer of 27-58 and 94-115) does not bind to insulin receptor subunit B (INSR, HIR-B) and insulin-like growth factor 1 receptor (IGF1R). The truncated synthetic analog shows very weak inhibitory activity against mammalian potassium, sodium, and calcium voltage-gated channels (rKv1.2/KCNA2, hKv1.3/KCNA3, rKv2.1/KCNB1, hKv3.1/KCNC1, rKv4.2/KCND2, hKv7.2/hKv7.3 (KCNQ2/KCNQ3), hKv10.1/KCNH1/EAG1, hKv11.1/KCNH2/ERG1 and Shaker IR, rNav1.2/SCN2A, rNav1.3/SCN3A, rNav1.4/SCN4A, hNav1.5/SCN5A, rNav1.6/SCN8A, hNav1.7/SCN9A, BgNaV, hCav3.1/CACNA1G).</text>
</comment>
<comment type="similarity">
    <text evidence="5">Belongs to the insulin family.</text>
</comment>
<proteinExistence type="evidence at transcript level"/>
<reference key="1">
    <citation type="journal article" date="2021" name="Biomolecules">
        <title>Identification, synthesis, conformation and activity of an insulin-like peptide from a sea anemone.</title>
        <authorList>
            <person name="Mitchell M.L."/>
            <person name="Hossain M.A."/>
            <person name="Lin F."/>
            <person name="Pinheiro-Junior E.L."/>
            <person name="Peigneur S."/>
            <person name="Wai D.C.C."/>
            <person name="Delaine C."/>
            <person name="Blyth A.J."/>
            <person name="Forbes B.E."/>
            <person name="Tytgat J."/>
            <person name="Wade J.D."/>
            <person name="Norton R.S."/>
        </authorList>
    </citation>
    <scope>NUCLEOTIDE SEQUENCE [MRNA]</scope>
    <scope>FUNCTION OF TRUNCATED SYNTHETIC PEPTIDE</scope>
    <scope>TISSUE SPECIFICITY</scope>
    <scope>SYNTHESIS OF 27-58 AND 94-115</scope>
    <scope>CIRCULAR DICHROISM ANALYSIS OF TRUNCATED SYNTHETIC PEPTIDE</scope>
    <source>
        <tissue>Tentacle</tissue>
    </source>
</reference>